<accession>Q9HVV7</accession>
<proteinExistence type="evidence at protein level"/>
<feature type="signal peptide" evidence="1">
    <location>
        <begin position="1"/>
        <end position="24"/>
    </location>
</feature>
<feature type="chain" id="PRO_5009019421" description="Lipopolysaccharide export system protein LptH" evidence="1">
    <location>
        <begin position="25"/>
        <end position="175"/>
    </location>
</feature>
<feature type="mutagenesis site" description="Cannot complement E.coli lptA-depleted mutants. Exhibits lower thermal stability." evidence="3">
    <original>G</original>
    <variation>R</variation>
    <location>
        <position position="135"/>
    </location>
</feature>
<feature type="turn" evidence="11">
    <location>
        <begin position="28"/>
        <end position="30"/>
    </location>
</feature>
<feature type="strand" evidence="11">
    <location>
        <begin position="34"/>
        <end position="36"/>
    </location>
</feature>
<feature type="strand" evidence="11">
    <location>
        <begin position="38"/>
        <end position="43"/>
    </location>
</feature>
<feature type="turn" evidence="11">
    <location>
        <begin position="44"/>
        <end position="47"/>
    </location>
</feature>
<feature type="strand" evidence="11">
    <location>
        <begin position="48"/>
        <end position="59"/>
    </location>
</feature>
<feature type="strand" evidence="11">
    <location>
        <begin position="62"/>
        <end position="73"/>
    </location>
</feature>
<feature type="strand" evidence="11">
    <location>
        <begin position="80"/>
        <end position="93"/>
    </location>
</feature>
<feature type="strand" evidence="11">
    <location>
        <begin position="95"/>
        <end position="99"/>
    </location>
</feature>
<feature type="strand" evidence="11">
    <location>
        <begin position="102"/>
        <end position="112"/>
    </location>
</feature>
<feature type="turn" evidence="11">
    <location>
        <begin position="113"/>
        <end position="116"/>
    </location>
</feature>
<feature type="strand" evidence="11">
    <location>
        <begin position="117"/>
        <end position="128"/>
    </location>
</feature>
<feature type="strand" evidence="11">
    <location>
        <begin position="131"/>
        <end position="144"/>
    </location>
</feature>
<feature type="strand" evidence="11">
    <location>
        <begin position="147"/>
        <end position="150"/>
    </location>
</feature>
<feature type="strand" evidence="11">
    <location>
        <begin position="165"/>
        <end position="167"/>
    </location>
</feature>
<organism>
    <name type="scientific">Pseudomonas aeruginosa (strain ATCC 15692 / DSM 22644 / CIP 104116 / JCM 14847 / LMG 12228 / 1C / PRS 101 / PAO1)</name>
    <dbReference type="NCBI Taxonomy" id="208964"/>
    <lineage>
        <taxon>Bacteria</taxon>
        <taxon>Pseudomonadati</taxon>
        <taxon>Pseudomonadota</taxon>
        <taxon>Gammaproteobacteria</taxon>
        <taxon>Pseudomonadales</taxon>
        <taxon>Pseudomonadaceae</taxon>
        <taxon>Pseudomonas</taxon>
    </lineage>
</organism>
<gene>
    <name evidence="7" type="primary">lptH</name>
    <name evidence="1 6" type="synonym">lptA</name>
    <name evidence="9" type="ordered locus">PA4460</name>
</gene>
<reference key="1">
    <citation type="journal article" date="2000" name="Nature">
        <title>Complete genome sequence of Pseudomonas aeruginosa PAO1, an opportunistic pathogen.</title>
        <authorList>
            <person name="Stover C.K."/>
            <person name="Pham X.-Q.T."/>
            <person name="Erwin A.L."/>
            <person name="Mizoguchi S.D."/>
            <person name="Warrener P."/>
            <person name="Hickey M.J."/>
            <person name="Brinkman F.S.L."/>
            <person name="Hufnagle W.O."/>
            <person name="Kowalik D.J."/>
            <person name="Lagrou M."/>
            <person name="Garber R.L."/>
            <person name="Goltry L."/>
            <person name="Tolentino E."/>
            <person name="Westbrock-Wadman S."/>
            <person name="Yuan Y."/>
            <person name="Brody L.L."/>
            <person name="Coulter S.N."/>
            <person name="Folger K.R."/>
            <person name="Kas A."/>
            <person name="Larbig K."/>
            <person name="Lim R.M."/>
            <person name="Smith K.A."/>
            <person name="Spencer D.H."/>
            <person name="Wong G.K.-S."/>
            <person name="Wu Z."/>
            <person name="Paulsen I.T."/>
            <person name="Reizer J."/>
            <person name="Saier M.H. Jr."/>
            <person name="Hancock R.E.W."/>
            <person name="Lory S."/>
            <person name="Olson M.V."/>
        </authorList>
    </citation>
    <scope>NUCLEOTIDE SEQUENCE [LARGE SCALE GENOMIC DNA]</scope>
    <source>
        <strain>ATCC 15692 / DSM 22644 / CIP 104116 / JCM 14847 / LMG 12228 / 1C / PRS 101 / PAO1</strain>
    </source>
</reference>
<reference key="2">
    <citation type="journal article" date="2014" name="Biochem. Biophys. Res. Commun.">
        <title>Dimerization of isolated Pseudomonas aeruginosa lipopolysaccharide transporter component LptA.</title>
        <authorList>
            <person name="Shapiro A.B."/>
            <person name="Gu R.F."/>
            <person name="Gao N."/>
        </authorList>
    </citation>
    <scope>SUBUNIT</scope>
    <scope>LIPOPOLYSACCHARIDE BINDING</scope>
</reference>
<reference key="3">
    <citation type="journal article" date="2015" name="Sci. Rep.">
        <title>In vitro and in vivo screening for novel essential cell-envelope proteins in Pseudomonas aeruginosa.</title>
        <authorList>
            <person name="Fernandez-Pinar R."/>
            <person name="Lo Sciuto A."/>
            <person name="Rossi A."/>
            <person name="Ranucci S."/>
            <person name="Bragonzi A."/>
            <person name="Imperi F."/>
        </authorList>
    </citation>
    <scope>FUNCTION</scope>
    <scope>DISRUPTION PHENOTYPE</scope>
    <scope>IDENTIFICATION AS A DRUG TARGET</scope>
    <source>
        <strain>ATCC 15692 / DSM 22644 / CIP 104116 / JCM 14847 / LMG 12228 / 1C / PRS 101 / PAO1</strain>
    </source>
</reference>
<reference key="4">
    <citation type="journal article" date="2020" name="Sci. Rep.">
        <title>Mutational analysis of the essential lipopolysaccharide-transport protein LptH of Pseudomonas aeruginosa to uncover critical oligomerization sites.</title>
        <authorList>
            <person name="Scala R."/>
            <person name="Di Matteo A."/>
            <person name="Coluccia A."/>
            <person name="Lo Sciuto A."/>
            <person name="Federici L."/>
            <person name="Travaglini-Allocatelli C."/>
            <person name="Visca P."/>
            <person name="Silvestri R."/>
            <person name="Imperi F."/>
        </authorList>
    </citation>
    <scope>SUBUNIT</scope>
    <source>
        <strain>ATCC 15692 / DSM 22644 / CIP 104116 / JCM 14847 / LMG 12228 / 1C / PRS 101 / PAO1</strain>
    </source>
</reference>
<reference evidence="10" key="5">
    <citation type="journal article" date="2015" name="FEBS J.">
        <title>Crystal structure of LptH, the periplasmic component of the lipopolysaccharide transport machinery from Pseudomonas aeruginosa.</title>
        <authorList>
            <person name="Bollati M."/>
            <person name="Villa R."/>
            <person name="Gourlay L.J."/>
            <person name="Benedet M."/>
            <person name="Deho G."/>
            <person name="Polissi A."/>
            <person name="Barbiroli A."/>
            <person name="Martorana A.M."/>
            <person name="Sperandeo P."/>
            <person name="Bolognesi M."/>
            <person name="Nardini M."/>
        </authorList>
    </citation>
    <scope>X-RAY CRYSTALLOGRAPHY (2.75 ANGSTROMS)</scope>
    <scope>NOMENCLATURE</scope>
    <scope>SUBUNIT</scope>
    <scope>DOMAIN</scope>
    <scope>MUTAGENESIS OF GLY-135</scope>
    <source>
        <strain>ATCC 15692 / DSM 22644 / CIP 104116 / JCM 14847 / LMG 12228 / 1C / PRS 101 / PAO1</strain>
    </source>
</reference>
<evidence type="ECO:0000255" key="1">
    <source>
        <dbReference type="HAMAP-Rule" id="MF_01914"/>
    </source>
</evidence>
<evidence type="ECO:0000269" key="2">
    <source>
    </source>
</evidence>
<evidence type="ECO:0000269" key="3">
    <source>
    </source>
</evidence>
<evidence type="ECO:0000269" key="4">
    <source>
    </source>
</evidence>
<evidence type="ECO:0000269" key="5">
    <source>
    </source>
</evidence>
<evidence type="ECO:0000303" key="6">
    <source>
    </source>
</evidence>
<evidence type="ECO:0000303" key="7">
    <source>
    </source>
</evidence>
<evidence type="ECO:0000305" key="8"/>
<evidence type="ECO:0000312" key="9">
    <source>
        <dbReference type="EMBL" id="AAG07848.1"/>
    </source>
</evidence>
<evidence type="ECO:0007744" key="10">
    <source>
        <dbReference type="PDB" id="4UU4"/>
    </source>
</evidence>
<evidence type="ECO:0007829" key="11">
    <source>
        <dbReference type="PDB" id="4UU4"/>
    </source>
</evidence>
<keyword id="KW-0002">3D-structure</keyword>
<keyword id="KW-0574">Periplasm</keyword>
<keyword id="KW-1185">Reference proteome</keyword>
<keyword id="KW-0732">Signal</keyword>
<keyword id="KW-0813">Transport</keyword>
<name>LPTA_PSEAE</name>
<comment type="function">
    <text evidence="1 2 4">Involved in the assembly of lipopolysaccharide (LPS). Required for the translocation of LPS from the inner membrane to the outer membrane. May form a bridge between the inner membrane and the outer membrane, via interactions with LptC and LptD, thereby facilitating LPS transfer across the periplasm (By similarity). Binds LPS (PubMed:25003324). Important for cell envelope stability and essential for growth, cell viability and ability to cause infection in different animal models (PubMed:26621210).</text>
</comment>
<comment type="subunit">
    <text evidence="1 2 3 5">Component of the lipopolysaccharide transport and assembly complex (By similarity). Mainly exists as a dimer in solution (PubMed:25003324, PubMed:25735820, PubMed:32647254). Tends to oligomerize already in solution (PubMed:25735820). The protomers follow one another in a head-to-tail fashion throughout the crystal lattice, yielding a continuous fiber arrangement (PubMed:25735820).</text>
</comment>
<comment type="subcellular location">
    <subcellularLocation>
        <location evidence="1">Periplasm</location>
    </subcellularLocation>
</comment>
<comment type="domain">
    <text evidence="3">Adopts the canonical beta-jellyroll structure present in E.coli Lpt proteins.</text>
</comment>
<comment type="disruption phenotype">
    <text evidence="4">Essential, it cannot be deleted (PubMed:26621210). LptH depletion affects cell envelope stability, and almost completely abrogates the ability to cause infection in a G.mellonella model of infection and in a mouse model of pulmonary infection (PubMed:26621210).</text>
</comment>
<comment type="miscellaneous">
    <text evidence="3">Can complement E.coli lptA-depleted mutants (PubMed:25735820). Can functionally replace E.coli-LptA in the Lpt complex to ensure cell viability, although outer membrane biogenesis and functionality appear to be partially impaired (PubMed:25735820).</text>
</comment>
<comment type="miscellaneous">
    <text evidence="4">Was identified as a promising drug target.</text>
</comment>
<comment type="similarity">
    <text evidence="1">Belongs to the LptA family.</text>
</comment>
<comment type="caution">
    <text evidence="3">Renamed LptH in P.aeruginosa to avoid acronym homonymy with the lysophosphatidic acid acyltransferase protein LptA.</text>
</comment>
<protein>
    <recommendedName>
        <fullName evidence="8">Lipopolysaccharide export system protein LptH</fullName>
    </recommendedName>
    <alternativeName>
        <fullName evidence="7">Pa-LptH</fullName>
    </alternativeName>
</protein>
<sequence length="175" mass="19126">MRFVNTLPLIFGLTAALGSSMALALPSDREQPIRVQADSAELDDKQGVAVYRGDVVVTQGSTKLTGNTVTLKQDKNGDIEVVTSVGKPAYYEQKPAPDKDVTKAYGLTIQYFVTQNRVVLIDQAKVIQEGNTFEGEKIVYDTQRQIVNAGRATGSQVTSPRPRIDMVIQPKKKAQ</sequence>
<dbReference type="EMBL" id="AE004091">
    <property type="protein sequence ID" value="AAG07848.1"/>
    <property type="molecule type" value="Genomic_DNA"/>
</dbReference>
<dbReference type="PIR" id="D83087">
    <property type="entry name" value="D83087"/>
</dbReference>
<dbReference type="RefSeq" id="NP_253150.1">
    <property type="nucleotide sequence ID" value="NC_002516.2"/>
</dbReference>
<dbReference type="RefSeq" id="WP_003120916.1">
    <property type="nucleotide sequence ID" value="NZ_QZGE01000004.1"/>
</dbReference>
<dbReference type="PDB" id="4UU4">
    <property type="method" value="X-ray"/>
    <property type="resolution" value="2.75 A"/>
    <property type="chains" value="A=1-175"/>
</dbReference>
<dbReference type="PDBsum" id="4UU4"/>
<dbReference type="SMR" id="Q9HVV7"/>
<dbReference type="FunCoup" id="Q9HVV7">
    <property type="interactions" value="64"/>
</dbReference>
<dbReference type="STRING" id="208964.PA4460"/>
<dbReference type="PaxDb" id="208964-PA4460"/>
<dbReference type="DNASU" id="881017"/>
<dbReference type="GeneID" id="881017"/>
<dbReference type="KEGG" id="pae:PA4460"/>
<dbReference type="PATRIC" id="fig|208964.12.peg.4670"/>
<dbReference type="PseudoCAP" id="PA4460"/>
<dbReference type="HOGENOM" id="CLU_095993_4_1_6"/>
<dbReference type="InParanoid" id="Q9HVV7"/>
<dbReference type="OrthoDB" id="9795964at2"/>
<dbReference type="PhylomeDB" id="Q9HVV7"/>
<dbReference type="BioCyc" id="PAER208964:G1FZ6-4549-MONOMER"/>
<dbReference type="EvolutionaryTrace" id="Q9HVV7"/>
<dbReference type="Proteomes" id="UP000002438">
    <property type="component" value="Chromosome"/>
</dbReference>
<dbReference type="GO" id="GO:0009279">
    <property type="term" value="C:cell outer membrane"/>
    <property type="evidence" value="ECO:0000318"/>
    <property type="project" value="GO_Central"/>
</dbReference>
<dbReference type="GO" id="GO:0030288">
    <property type="term" value="C:outer membrane-bounded periplasmic space"/>
    <property type="evidence" value="ECO:0000318"/>
    <property type="project" value="GO_Central"/>
</dbReference>
<dbReference type="GO" id="GO:0017089">
    <property type="term" value="F:glycolipid transfer activity"/>
    <property type="evidence" value="ECO:0000318"/>
    <property type="project" value="GO_Central"/>
</dbReference>
<dbReference type="GO" id="GO:0001530">
    <property type="term" value="F:lipopolysaccharide binding"/>
    <property type="evidence" value="ECO:0000250"/>
    <property type="project" value="PseudoCAP"/>
</dbReference>
<dbReference type="GO" id="GO:0043165">
    <property type="term" value="P:Gram-negative-bacterium-type cell outer membrane assembly"/>
    <property type="evidence" value="ECO:0007669"/>
    <property type="project" value="UniProtKB-UniRule"/>
</dbReference>
<dbReference type="GO" id="GO:0015920">
    <property type="term" value="P:lipopolysaccharide transport"/>
    <property type="evidence" value="ECO:0000318"/>
    <property type="project" value="GO_Central"/>
</dbReference>
<dbReference type="FunFam" id="2.60.450.10:FF:000006">
    <property type="entry name" value="Lipopolysaccharide export system protein LptA"/>
    <property type="match status" value="1"/>
</dbReference>
<dbReference type="Gene3D" id="2.60.450.10">
    <property type="entry name" value="Lipopolysaccharide (LPS) transport protein A like domain"/>
    <property type="match status" value="1"/>
</dbReference>
<dbReference type="HAMAP" id="MF_01914">
    <property type="entry name" value="LPS_assembly_LptA"/>
    <property type="match status" value="1"/>
</dbReference>
<dbReference type="InterPro" id="IPR052037">
    <property type="entry name" value="LPS_export_LptA"/>
</dbReference>
<dbReference type="InterPro" id="IPR014340">
    <property type="entry name" value="LptA"/>
</dbReference>
<dbReference type="InterPro" id="IPR005653">
    <property type="entry name" value="OstA-like_N"/>
</dbReference>
<dbReference type="NCBIfam" id="TIGR03002">
    <property type="entry name" value="outer_YhbN_LptA"/>
    <property type="match status" value="1"/>
</dbReference>
<dbReference type="PANTHER" id="PTHR36504">
    <property type="entry name" value="LIPOPOLYSACCHARIDE EXPORT SYSTEM PROTEIN LPTA"/>
    <property type="match status" value="1"/>
</dbReference>
<dbReference type="PANTHER" id="PTHR36504:SF1">
    <property type="entry name" value="LIPOPOLYSACCHARIDE EXPORT SYSTEM PROTEIN LPTA"/>
    <property type="match status" value="1"/>
</dbReference>
<dbReference type="Pfam" id="PF03968">
    <property type="entry name" value="LptD_N"/>
    <property type="match status" value="1"/>
</dbReference>